<dbReference type="EMBL" id="CP001043">
    <property type="protein sequence ID" value="ACC70520.1"/>
    <property type="molecule type" value="Genomic_DNA"/>
</dbReference>
<dbReference type="RefSeq" id="WP_012400734.1">
    <property type="nucleotide sequence ID" value="NC_010622.1"/>
</dbReference>
<dbReference type="SMR" id="B2JIC6"/>
<dbReference type="STRING" id="391038.Bphy_1338"/>
<dbReference type="KEGG" id="bph:Bphy_1338"/>
<dbReference type="eggNOG" id="COG0052">
    <property type="taxonomic scope" value="Bacteria"/>
</dbReference>
<dbReference type="HOGENOM" id="CLU_040318_1_2_4"/>
<dbReference type="OrthoDB" id="9808036at2"/>
<dbReference type="Proteomes" id="UP000001192">
    <property type="component" value="Chromosome 1"/>
</dbReference>
<dbReference type="GO" id="GO:0022627">
    <property type="term" value="C:cytosolic small ribosomal subunit"/>
    <property type="evidence" value="ECO:0007669"/>
    <property type="project" value="TreeGrafter"/>
</dbReference>
<dbReference type="GO" id="GO:0003735">
    <property type="term" value="F:structural constituent of ribosome"/>
    <property type="evidence" value="ECO:0007669"/>
    <property type="project" value="InterPro"/>
</dbReference>
<dbReference type="GO" id="GO:0006412">
    <property type="term" value="P:translation"/>
    <property type="evidence" value="ECO:0007669"/>
    <property type="project" value="UniProtKB-UniRule"/>
</dbReference>
<dbReference type="CDD" id="cd01425">
    <property type="entry name" value="RPS2"/>
    <property type="match status" value="1"/>
</dbReference>
<dbReference type="FunFam" id="1.10.287.610:FF:000001">
    <property type="entry name" value="30S ribosomal protein S2"/>
    <property type="match status" value="1"/>
</dbReference>
<dbReference type="Gene3D" id="3.40.50.10490">
    <property type="entry name" value="Glucose-6-phosphate isomerase like protein, domain 1"/>
    <property type="match status" value="1"/>
</dbReference>
<dbReference type="Gene3D" id="1.10.287.610">
    <property type="entry name" value="Helix hairpin bin"/>
    <property type="match status" value="1"/>
</dbReference>
<dbReference type="HAMAP" id="MF_00291_B">
    <property type="entry name" value="Ribosomal_uS2_B"/>
    <property type="match status" value="1"/>
</dbReference>
<dbReference type="InterPro" id="IPR001865">
    <property type="entry name" value="Ribosomal_uS2"/>
</dbReference>
<dbReference type="InterPro" id="IPR005706">
    <property type="entry name" value="Ribosomal_uS2_bac/mit/plastid"/>
</dbReference>
<dbReference type="InterPro" id="IPR018130">
    <property type="entry name" value="Ribosomal_uS2_CS"/>
</dbReference>
<dbReference type="InterPro" id="IPR023591">
    <property type="entry name" value="Ribosomal_uS2_flav_dom_sf"/>
</dbReference>
<dbReference type="NCBIfam" id="TIGR01011">
    <property type="entry name" value="rpsB_bact"/>
    <property type="match status" value="1"/>
</dbReference>
<dbReference type="PANTHER" id="PTHR12534">
    <property type="entry name" value="30S RIBOSOMAL PROTEIN S2 PROKARYOTIC AND ORGANELLAR"/>
    <property type="match status" value="1"/>
</dbReference>
<dbReference type="PANTHER" id="PTHR12534:SF0">
    <property type="entry name" value="SMALL RIBOSOMAL SUBUNIT PROTEIN US2M"/>
    <property type="match status" value="1"/>
</dbReference>
<dbReference type="Pfam" id="PF00318">
    <property type="entry name" value="Ribosomal_S2"/>
    <property type="match status" value="1"/>
</dbReference>
<dbReference type="PRINTS" id="PR00395">
    <property type="entry name" value="RIBOSOMALS2"/>
</dbReference>
<dbReference type="SUPFAM" id="SSF52313">
    <property type="entry name" value="Ribosomal protein S2"/>
    <property type="match status" value="1"/>
</dbReference>
<dbReference type="PROSITE" id="PS00962">
    <property type="entry name" value="RIBOSOMAL_S2_1"/>
    <property type="match status" value="1"/>
</dbReference>
<reference key="1">
    <citation type="journal article" date="2014" name="Stand. Genomic Sci.">
        <title>Complete genome sequence of Burkholderia phymatum STM815(T), a broad host range and efficient nitrogen-fixing symbiont of Mimosa species.</title>
        <authorList>
            <person name="Moulin L."/>
            <person name="Klonowska A."/>
            <person name="Caroline B."/>
            <person name="Booth K."/>
            <person name="Vriezen J.A."/>
            <person name="Melkonian R."/>
            <person name="James E.K."/>
            <person name="Young J.P."/>
            <person name="Bena G."/>
            <person name="Hauser L."/>
            <person name="Land M."/>
            <person name="Kyrpides N."/>
            <person name="Bruce D."/>
            <person name="Chain P."/>
            <person name="Copeland A."/>
            <person name="Pitluck S."/>
            <person name="Woyke T."/>
            <person name="Lizotte-Waniewski M."/>
            <person name="Bristow J."/>
            <person name="Riley M."/>
        </authorList>
    </citation>
    <scope>NUCLEOTIDE SEQUENCE [LARGE SCALE GENOMIC DNA]</scope>
    <source>
        <strain>DSM 17167 / CIP 108236 / LMG 21445 / STM815</strain>
    </source>
</reference>
<accession>B2JIC6</accession>
<protein>
    <recommendedName>
        <fullName evidence="1">Small ribosomal subunit protein uS2</fullName>
    </recommendedName>
    <alternativeName>
        <fullName evidence="2">30S ribosomal protein S2</fullName>
    </alternativeName>
</protein>
<gene>
    <name evidence="1" type="primary">rpsB</name>
    <name type="ordered locus">Bphy_1338</name>
</gene>
<comment type="similarity">
    <text evidence="1">Belongs to the universal ribosomal protein uS2 family.</text>
</comment>
<keyword id="KW-1185">Reference proteome</keyword>
<keyword id="KW-0687">Ribonucleoprotein</keyword>
<keyword id="KW-0689">Ribosomal protein</keyword>
<organism>
    <name type="scientific">Paraburkholderia phymatum (strain DSM 17167 / CIP 108236 / LMG 21445 / STM815)</name>
    <name type="common">Burkholderia phymatum</name>
    <dbReference type="NCBI Taxonomy" id="391038"/>
    <lineage>
        <taxon>Bacteria</taxon>
        <taxon>Pseudomonadati</taxon>
        <taxon>Pseudomonadota</taxon>
        <taxon>Betaproteobacteria</taxon>
        <taxon>Burkholderiales</taxon>
        <taxon>Burkholderiaceae</taxon>
        <taxon>Paraburkholderia</taxon>
    </lineage>
</organism>
<proteinExistence type="inferred from homology"/>
<feature type="chain" id="PRO_1000115000" description="Small ribosomal subunit protein uS2">
    <location>
        <begin position="1"/>
        <end position="250"/>
    </location>
</feature>
<sequence length="250" mass="27350">MAVTMRQMLEAGVHFGHQTRFWNPKMAPFIFGHRNKIHIINLEKTLPMYNDALKYVRQLAANRGTILFVGTKRQSRDTIAEAAQRAGMPYVNARWLGGMLTNFKTLKVSIKRLKDMEAAVEAGELEKMSKKEALLFEREIAKLQKSIGGVKDMGGIPDAIFVVDVGYHKIAVTEANKLGVPVIAVVDTNHSPEGVDYVIPGNDDASKAVALYTQGVADAILEGRANAVNEVVQAVRGGDGDEFVEVNGEA</sequence>
<evidence type="ECO:0000255" key="1">
    <source>
        <dbReference type="HAMAP-Rule" id="MF_00291"/>
    </source>
</evidence>
<evidence type="ECO:0000305" key="2"/>
<name>RS2_PARP8</name>